<dbReference type="EC" id="1.13.11.11" evidence="1"/>
<dbReference type="EMBL" id="AE017194">
    <property type="protein sequence ID" value="AAS41697.1"/>
    <property type="molecule type" value="Genomic_DNA"/>
</dbReference>
<dbReference type="SMR" id="Q736W5"/>
<dbReference type="KEGG" id="bca:BCE_2785"/>
<dbReference type="HOGENOM" id="CLU_063240_0_0_9"/>
<dbReference type="UniPathway" id="UPA00333">
    <property type="reaction ID" value="UER00453"/>
</dbReference>
<dbReference type="Proteomes" id="UP000002527">
    <property type="component" value="Chromosome"/>
</dbReference>
<dbReference type="GO" id="GO:0020037">
    <property type="term" value="F:heme binding"/>
    <property type="evidence" value="ECO:0000250"/>
    <property type="project" value="UniProtKB"/>
</dbReference>
<dbReference type="GO" id="GO:0046872">
    <property type="term" value="F:metal ion binding"/>
    <property type="evidence" value="ECO:0007669"/>
    <property type="project" value="UniProtKB-KW"/>
</dbReference>
<dbReference type="GO" id="GO:0004833">
    <property type="term" value="F:tryptophan 2,3-dioxygenase activity"/>
    <property type="evidence" value="ECO:0000250"/>
    <property type="project" value="UniProtKB"/>
</dbReference>
<dbReference type="GO" id="GO:0019442">
    <property type="term" value="P:L-tryptophan catabolic process to acetyl-CoA"/>
    <property type="evidence" value="ECO:0007669"/>
    <property type="project" value="TreeGrafter"/>
</dbReference>
<dbReference type="GO" id="GO:0019441">
    <property type="term" value="P:L-tryptophan catabolic process to kynurenine"/>
    <property type="evidence" value="ECO:0000250"/>
    <property type="project" value="UniProtKB"/>
</dbReference>
<dbReference type="FunFam" id="1.20.58.480:FF:000001">
    <property type="entry name" value="Tryptophan 2,3-dioxygenase"/>
    <property type="match status" value="1"/>
</dbReference>
<dbReference type="Gene3D" id="1.20.58.480">
    <property type="match status" value="1"/>
</dbReference>
<dbReference type="HAMAP" id="MF_01972">
    <property type="entry name" value="T23O"/>
    <property type="match status" value="1"/>
</dbReference>
<dbReference type="InterPro" id="IPR037217">
    <property type="entry name" value="Trp/Indoleamine_2_3_dOase-like"/>
</dbReference>
<dbReference type="InterPro" id="IPR017485">
    <property type="entry name" value="Trp_2-3-dOase_bac"/>
</dbReference>
<dbReference type="InterPro" id="IPR004981">
    <property type="entry name" value="Trp_2_3_dOase"/>
</dbReference>
<dbReference type="NCBIfam" id="TIGR03036">
    <property type="entry name" value="trp_2_3_diox"/>
    <property type="match status" value="1"/>
</dbReference>
<dbReference type="PANTHER" id="PTHR10138">
    <property type="entry name" value="TRYPTOPHAN 2,3-DIOXYGENASE"/>
    <property type="match status" value="1"/>
</dbReference>
<dbReference type="PANTHER" id="PTHR10138:SF0">
    <property type="entry name" value="TRYPTOPHAN 2,3-DIOXYGENASE"/>
    <property type="match status" value="1"/>
</dbReference>
<dbReference type="Pfam" id="PF03301">
    <property type="entry name" value="Trp_dioxygenase"/>
    <property type="match status" value="1"/>
</dbReference>
<dbReference type="SUPFAM" id="SSF140959">
    <property type="entry name" value="Indolic compounds 2,3-dioxygenase-like"/>
    <property type="match status" value="1"/>
</dbReference>
<name>T23O_BACC1</name>
<proteinExistence type="inferred from homology"/>
<feature type="chain" id="PRO_0000360085" description="Tryptophan 2,3-dioxygenase">
    <location>
        <begin position="1"/>
        <end position="279"/>
    </location>
</feature>
<feature type="binding site" evidence="1">
    <location>
        <begin position="48"/>
        <end position="52"/>
    </location>
    <ligand>
        <name>substrate</name>
    </ligand>
</feature>
<feature type="binding site" evidence="1">
    <location>
        <position position="110"/>
    </location>
    <ligand>
        <name>substrate</name>
    </ligand>
</feature>
<feature type="binding site" evidence="1">
    <location>
        <position position="114"/>
    </location>
    <ligand>
        <name>substrate</name>
    </ligand>
</feature>
<feature type="binding site" description="axial binding residue" evidence="1">
    <location>
        <position position="237"/>
    </location>
    <ligand>
        <name>heme</name>
        <dbReference type="ChEBI" id="CHEBI:30413"/>
    </ligand>
    <ligandPart>
        <name>Fe</name>
        <dbReference type="ChEBI" id="CHEBI:18248"/>
    </ligandPart>
</feature>
<feature type="binding site" evidence="1">
    <location>
        <position position="251"/>
    </location>
    <ligand>
        <name>substrate</name>
    </ligand>
</feature>
<reference key="1">
    <citation type="journal article" date="2004" name="Nucleic Acids Res.">
        <title>The genome sequence of Bacillus cereus ATCC 10987 reveals metabolic adaptations and a large plasmid related to Bacillus anthracis pXO1.</title>
        <authorList>
            <person name="Rasko D.A."/>
            <person name="Ravel J."/>
            <person name="Oekstad O.A."/>
            <person name="Helgason E."/>
            <person name="Cer R.Z."/>
            <person name="Jiang L."/>
            <person name="Shores K.A."/>
            <person name="Fouts D.E."/>
            <person name="Tourasse N.J."/>
            <person name="Angiuoli S.V."/>
            <person name="Kolonay J.F."/>
            <person name="Nelson W.C."/>
            <person name="Kolstoe A.-B."/>
            <person name="Fraser C.M."/>
            <person name="Read T.D."/>
        </authorList>
    </citation>
    <scope>NUCLEOTIDE SEQUENCE [LARGE SCALE GENOMIC DNA]</scope>
    <source>
        <strain>ATCC 10987 / NRS 248</strain>
    </source>
</reference>
<protein>
    <recommendedName>
        <fullName evidence="1">Tryptophan 2,3-dioxygenase</fullName>
        <shortName evidence="1">TDO</shortName>
        <ecNumber evidence="1">1.13.11.11</ecNumber>
    </recommendedName>
    <alternativeName>
        <fullName evidence="1">Tryptamin 2,3-dioxygenase</fullName>
    </alternativeName>
    <alternativeName>
        <fullName evidence="1">Tryptophan oxygenase</fullName>
        <shortName evidence="1">TO</shortName>
        <shortName evidence="1">TRPO</shortName>
    </alternativeName>
    <alternativeName>
        <fullName evidence="1">Tryptophan pyrrolase</fullName>
    </alternativeName>
    <alternativeName>
        <fullName evidence="1">Tryptophanase</fullName>
    </alternativeName>
</protein>
<evidence type="ECO:0000255" key="1">
    <source>
        <dbReference type="HAMAP-Rule" id="MF_01972"/>
    </source>
</evidence>
<organism>
    <name type="scientific">Bacillus cereus (strain ATCC 10987 / NRS 248)</name>
    <dbReference type="NCBI Taxonomy" id="222523"/>
    <lineage>
        <taxon>Bacteria</taxon>
        <taxon>Bacillati</taxon>
        <taxon>Bacillota</taxon>
        <taxon>Bacilli</taxon>
        <taxon>Bacillales</taxon>
        <taxon>Bacillaceae</taxon>
        <taxon>Bacillus</taxon>
        <taxon>Bacillus cereus group</taxon>
    </lineage>
</organism>
<comment type="function">
    <text evidence="1">Heme-dependent dioxygenase that catalyzes the oxidative cleavage of the L-tryptophan (L-Trp) pyrrole ring and converts L-tryptophan to N-formyl-L-kynurenine. Catalyzes the oxidative cleavage of the indole moiety.</text>
</comment>
<comment type="catalytic activity">
    <reaction evidence="1">
        <text>L-tryptophan + O2 = N-formyl-L-kynurenine</text>
        <dbReference type="Rhea" id="RHEA:24536"/>
        <dbReference type="ChEBI" id="CHEBI:15379"/>
        <dbReference type="ChEBI" id="CHEBI:57912"/>
        <dbReference type="ChEBI" id="CHEBI:58629"/>
        <dbReference type="EC" id="1.13.11.11"/>
    </reaction>
</comment>
<comment type="cofactor">
    <cofactor evidence="1">
        <name>heme</name>
        <dbReference type="ChEBI" id="CHEBI:30413"/>
    </cofactor>
    <text evidence="1">Binds 1 heme group per subunit.</text>
</comment>
<comment type="pathway">
    <text evidence="1">Amino-acid degradation; L-tryptophan degradation via kynurenine pathway; L-kynurenine from L-tryptophan: step 1/2.</text>
</comment>
<comment type="subunit">
    <text evidence="1">Homotetramer.</text>
</comment>
<comment type="similarity">
    <text evidence="1">Belongs to the tryptophan 2,3-dioxygenase family.</text>
</comment>
<gene>
    <name evidence="1" type="primary">kynA</name>
    <name type="ordered locus">BCE_2785</name>
</gene>
<sequence length="279" mass="32822">MKENEKIIMEKGIHTDFKENMTYGEYLQLDSLLSSQKRLSDHHDEMLFIVIHQASELWMKLILHELYAAIESIKQDKLQPAFKMLARVSKIQSQIIQSWDILATLTPSEYIEFRDSLGQASGFQSYQYRMIEYALGYKTPHALKIYEKDPELHARLHTALHAPSLYDVAIQALVKEGFPIHKDVLNRDITQPYEEDATVEAAWLEVYADVKKYWNLYQLAEKLIDIEDWLQQWRFRHMKTVERIIGHKMGTGGSSGVSYLKRVLDQRFFPELWNVRTKL</sequence>
<keyword id="KW-0223">Dioxygenase</keyword>
<keyword id="KW-0349">Heme</keyword>
<keyword id="KW-0408">Iron</keyword>
<keyword id="KW-0479">Metal-binding</keyword>
<keyword id="KW-0560">Oxidoreductase</keyword>
<keyword id="KW-0823">Tryptophan catabolism</keyword>
<accession>Q736W5</accession>